<gene>
    <name type="primary">ACR</name>
</gene>
<protein>
    <recommendedName>
        <fullName>Acrosin</fullName>
        <ecNumber>3.4.21.10</ecNumber>
    </recommendedName>
    <alternativeName>
        <fullName>53 kDa fucose-binding protein</fullName>
    </alternativeName>
    <component>
        <recommendedName>
            <fullName>Acrosin light chain</fullName>
        </recommendedName>
    </component>
    <component>
        <recommendedName>
            <fullName>Acrosin heavy chain</fullName>
        </recommendedName>
    </component>
</protein>
<keyword id="KW-0002">3D-structure</keyword>
<keyword id="KW-0903">Direct protein sequencing</keyword>
<keyword id="KW-1015">Disulfide bond</keyword>
<keyword id="KW-0325">Glycoprotein</keyword>
<keyword id="KW-0378">Hydrolase</keyword>
<keyword id="KW-0645">Protease</keyword>
<keyword id="KW-1185">Reference proteome</keyword>
<keyword id="KW-0720">Serine protease</keyword>
<keyword id="KW-0732">Signal</keyword>
<keyword id="KW-0865">Zymogen</keyword>
<feature type="signal peptide" evidence="4 6 7">
    <location>
        <begin position="1"/>
        <end position="16"/>
    </location>
</feature>
<feature type="chain" id="PRO_0000027526" description="Acrosin">
    <location>
        <begin position="17"/>
        <end position="415"/>
    </location>
</feature>
<feature type="chain" id="PRO_0000027527" description="Acrosin light chain">
    <location>
        <begin position="17"/>
        <end position="39"/>
    </location>
</feature>
<feature type="chain" id="PRO_0000027528" description="Acrosin heavy chain">
    <location>
        <begin position="40"/>
        <end position="338"/>
    </location>
</feature>
<feature type="propeptide" id="PRO_0000027529" description="Pro-rich">
    <location>
        <begin position="339"/>
        <end position="415"/>
    </location>
</feature>
<feature type="domain" description="Peptidase S1" evidence="2">
    <location>
        <begin position="40"/>
        <end position="288"/>
    </location>
</feature>
<feature type="region of interest" description="Disordered" evidence="3">
    <location>
        <begin position="296"/>
        <end position="376"/>
    </location>
</feature>
<feature type="region of interest" description="Disordered" evidence="3">
    <location>
        <begin position="395"/>
        <end position="415"/>
    </location>
</feature>
<feature type="compositionally biased region" description="Pro residues" evidence="3">
    <location>
        <begin position="300"/>
        <end position="312"/>
    </location>
</feature>
<feature type="compositionally biased region" description="Pro residues" evidence="3">
    <location>
        <begin position="328"/>
        <end position="367"/>
    </location>
</feature>
<feature type="compositionally biased region" description="Polar residues" evidence="3">
    <location>
        <begin position="395"/>
        <end position="409"/>
    </location>
</feature>
<feature type="active site" description="Charge relay system" evidence="1">
    <location>
        <position position="86"/>
    </location>
</feature>
<feature type="active site" description="Charge relay system" evidence="1">
    <location>
        <position position="140"/>
    </location>
</feature>
<feature type="active site" description="Charge relay system" evidence="1">
    <location>
        <position position="238"/>
    </location>
</feature>
<feature type="glycosylation site" description="N-linked (GlcNAc...) asparagine" evidence="5">
    <location>
        <position position="19"/>
    </location>
</feature>
<feature type="glycosylation site" description="N-linked (GlcNAc...) asparagine" evidence="5">
    <location>
        <position position="208"/>
    </location>
</feature>
<feature type="disulfide bond" description="Interchain (between light and heavy chains)" evidence="2 5">
    <location>
        <begin position="22"/>
        <end position="152"/>
    </location>
</feature>
<feature type="disulfide bond" description="Interchain (between light and heavy chains)" evidence="2 5">
    <location>
        <begin position="26"/>
        <end position="160"/>
    </location>
</feature>
<feature type="disulfide bond" evidence="2 5">
    <location>
        <begin position="71"/>
        <end position="87"/>
    </location>
</feature>
<feature type="disulfide bond" evidence="2 5">
    <location>
        <begin position="175"/>
        <end position="244"/>
    </location>
</feature>
<feature type="disulfide bond" evidence="2 5">
    <location>
        <begin position="207"/>
        <end position="223"/>
    </location>
</feature>
<feature type="disulfide bond" evidence="2 5">
    <location>
        <begin position="234"/>
        <end position="264"/>
    </location>
</feature>
<feature type="sequence conflict" description="In Ref. 2; CAA32948." evidence="8" ref="2">
    <location>
        <position position="8"/>
    </location>
</feature>
<feature type="sequence conflict" description="In Ref. 2; CAA32948." evidence="8" ref="2">
    <original>R</original>
    <variation>Q</variation>
    <location>
        <position position="211"/>
    </location>
</feature>
<feature type="sequence conflict" description="In Ref. 2; CAA32948." evidence="8" ref="2">
    <original>IR</original>
    <variation>VT</variation>
    <location>
        <begin position="217"/>
        <end position="218"/>
    </location>
</feature>
<feature type="sequence conflict" description="In Ref. 1; AAA31131." evidence="8" ref="1">
    <original>A</original>
    <variation>P</variation>
    <location>
        <position position="347"/>
    </location>
</feature>
<feature type="sequence conflict" description="In Ref. 2; CAA32948." evidence="8" ref="2">
    <location>
        <position position="389"/>
    </location>
</feature>
<feature type="sequence conflict" description="In Ref. 2." evidence="8" ref="2">
    <original>RSYY</original>
    <variation>KELL</variation>
    <location>
        <begin position="399"/>
        <end position="402"/>
    </location>
</feature>
<feature type="sequence conflict" description="In Ref. 2." evidence="8" ref="2">
    <location>
        <begin position="403"/>
        <end position="415"/>
    </location>
</feature>
<feature type="strand" evidence="9">
    <location>
        <begin position="24"/>
        <end position="27"/>
    </location>
</feature>
<feature type="strand" evidence="9">
    <location>
        <begin position="54"/>
        <end position="61"/>
    </location>
</feature>
<feature type="turn" evidence="9">
    <location>
        <begin position="62"/>
        <end position="65"/>
    </location>
</feature>
<feature type="strand" evidence="9">
    <location>
        <begin position="66"/>
        <end position="77"/>
    </location>
</feature>
<feature type="strand" evidence="9">
    <location>
        <begin position="80"/>
        <end position="83"/>
    </location>
</feature>
<feature type="helix" evidence="9">
    <location>
        <begin position="86"/>
        <end position="88"/>
    </location>
</feature>
<feature type="strand" evidence="9">
    <location>
        <begin position="96"/>
        <end position="102"/>
    </location>
</feature>
<feature type="strand" evidence="9">
    <location>
        <begin position="108"/>
        <end position="110"/>
    </location>
</feature>
<feature type="strand" evidence="9">
    <location>
        <begin position="119"/>
        <end position="128"/>
    </location>
</feature>
<feature type="turn" evidence="9">
    <location>
        <begin position="134"/>
        <end position="137"/>
    </location>
</feature>
<feature type="strand" evidence="9">
    <location>
        <begin position="142"/>
        <end position="148"/>
    </location>
</feature>
<feature type="strand" evidence="9">
    <location>
        <begin position="174"/>
        <end position="181"/>
    </location>
</feature>
<feature type="strand" evidence="9">
    <location>
        <begin position="183"/>
        <end position="186"/>
    </location>
</feature>
<feature type="strand" evidence="9">
    <location>
        <begin position="195"/>
        <end position="202"/>
    </location>
</feature>
<feature type="helix" evidence="9">
    <location>
        <begin position="204"/>
        <end position="208"/>
    </location>
</feature>
<feature type="turn" evidence="9">
    <location>
        <begin position="210"/>
        <end position="215"/>
    </location>
</feature>
<feature type="strand" evidence="9">
    <location>
        <begin position="221"/>
        <end position="225"/>
    </location>
</feature>
<feature type="strand" evidence="9">
    <location>
        <begin position="241"/>
        <end position="245"/>
    </location>
</feature>
<feature type="strand" evidence="9">
    <location>
        <begin position="253"/>
        <end position="260"/>
    </location>
</feature>
<feature type="strand" evidence="9">
    <location>
        <begin position="262"/>
        <end position="266"/>
    </location>
</feature>
<feature type="strand" evidence="9">
    <location>
        <begin position="271"/>
        <end position="276"/>
    </location>
</feature>
<feature type="helix" evidence="9">
    <location>
        <begin position="277"/>
        <end position="279"/>
    </location>
</feature>
<feature type="helix" evidence="9">
    <location>
        <begin position="280"/>
        <end position="287"/>
    </location>
</feature>
<feature type="helix" evidence="9">
    <location>
        <begin position="289"/>
        <end position="293"/>
    </location>
</feature>
<accession>P08001</accession>
<accession>P08000</accession>
<accession>Q29015</accession>
<reference key="1">
    <citation type="journal article" date="1989" name="J. Biol. Chem.">
        <title>Activation and maturation mechanisms of boar acrosin zymogen based on the deduced primary structure.</title>
        <authorList>
            <person name="Baba T."/>
            <person name="Kashiwabara S."/>
            <person name="Watanabe K."/>
            <person name="Itoh H."/>
            <person name="Michikawa Y."/>
            <person name="Kimura K."/>
            <person name="Takada M."/>
            <person name="Fukamizu A."/>
            <person name="Arai Y."/>
        </authorList>
    </citation>
    <scope>NUCLEOTIDE SEQUENCE [MRNA]</scope>
</reference>
<reference key="2">
    <citation type="journal article" date="1989" name="Eur. J. Biochem.">
        <title>Molecular cloning of preproacrosin and analysis of its expression pattern in spermatogenesis.</title>
        <authorList>
            <person name="Adham I.M."/>
            <person name="Maier W.-M."/>
            <person name="Hoyer-Fender S."/>
            <person name="Tsaousidou S."/>
            <person name="Engel W."/>
            <person name="Klemm U."/>
        </authorList>
    </citation>
    <scope>NUCLEOTIDE SEQUENCE [MRNA]</scope>
    <source>
        <tissue>Testis</tissue>
    </source>
</reference>
<reference key="3">
    <citation type="journal article" date="1996" name="Biol. Chem. Hoppe-Seyler">
        <title>The structures of the bovine and porcine proacrosin genes and their conservation during mammals.</title>
        <authorList>
            <person name="Adham I.M."/>
            <person name="Kremling H."/>
            <person name="Nieter S."/>
            <person name="Zimmermann S."/>
            <person name="Hummel M."/>
            <person name="Schroeter U."/>
            <person name="Engel W."/>
        </authorList>
    </citation>
    <scope>NUCLEOTIDE SEQUENCE [GENOMIC DNA]</scope>
    <source>
        <tissue>Liver</tissue>
    </source>
</reference>
<reference key="4">
    <citation type="journal article" date="1984" name="Eur. J. Biochem.">
        <title>Boar acrosin is a two-chain molecule. Isolation and primary structure of the light chain; homology with the pro-part of other serine proteinases.</title>
        <authorList>
            <person name="Fock-Nuezel R."/>
            <person name="Lottspeich F."/>
            <person name="Henschen A."/>
            <person name="Mueller-Esterl W."/>
        </authorList>
    </citation>
    <scope>PROTEIN SEQUENCE OF 17-39</scope>
    <source>
        <tissue>Sperm</tissue>
    </source>
</reference>
<reference key="5">
    <citation type="journal article" date="1980" name="Hoppe-Seyler's Z. Physiol. Chem.">
        <title>N-terminal amino acid sequence of boar sperm acrosin. Homology with other serine proteinases.</title>
        <authorList>
            <person name="Fock-Nuezel R."/>
            <person name="Lottspeich F."/>
            <person name="Henschen A."/>
            <person name="Mueller-Esterl W."/>
            <person name="Fritz H."/>
        </authorList>
    </citation>
    <scope>PROTEIN SEQUENCE OF 25-91</scope>
    <source>
        <tissue>Sperm</tissue>
    </source>
</reference>
<reference key="6">
    <citation type="journal article" date="1987" name="FEBS Lett.">
        <title>Acrosin shows zona and fucose binding, novel properties for a serine proteinase.</title>
        <authorList>
            <person name="Toepfer-Petersen E."/>
            <person name="Henschen A."/>
        </authorList>
    </citation>
    <scope>PROTEIN SEQUENCE OF 17-32 AND 40-53</scope>
    <source>
        <tissue>Sperm</tissue>
    </source>
</reference>
<reference key="7">
    <citation type="journal article" date="1990" name="Biol. Chem. Hoppe-Seyler">
        <title>Is sperminogen a modified proacrosin? Isolation, purification, and partial characterization of low-molecular-mass boar proacrosin.</title>
        <authorList>
            <person name="Cechova D."/>
            <person name="Toepfer-Petersen E."/>
            <person name="Zucker A."/>
            <person name="Jonakova V."/>
        </authorList>
    </citation>
    <scope>PROTEIN SEQUENCE OF 17-40</scope>
</reference>
<reference key="8">
    <citation type="journal article" date="1990" name="FEBS Lett.">
        <title>Complete localization of the disulfide bridges and glycosylation sites in boar sperm acrosin.</title>
        <authorList>
            <person name="Toepfer-Petersen E."/>
            <person name="Calvete J.J."/>
            <person name="Schaefer W."/>
            <person name="Henschen A."/>
        </authorList>
    </citation>
    <scope>PARTIAL PROTEIN SEQUENCE</scope>
    <scope>DISULFIDE BONDS</scope>
    <scope>GLYCOSYLATION AT ASN-19 AND ASN-208</scope>
    <source>
        <tissue>Sperm</tissue>
    </source>
</reference>
<dbReference type="EC" id="3.4.21.10"/>
<dbReference type="EMBL" id="J04950">
    <property type="protein sequence ID" value="AAA31131.1"/>
    <property type="molecule type" value="mRNA"/>
</dbReference>
<dbReference type="EMBL" id="X14844">
    <property type="protein sequence ID" value="CAA32948.1"/>
    <property type="molecule type" value="mRNA"/>
</dbReference>
<dbReference type="EMBL" id="X58549">
    <property type="protein sequence ID" value="CAA41440.1"/>
    <property type="molecule type" value="Genomic_DNA"/>
</dbReference>
<dbReference type="PIR" id="A34170">
    <property type="entry name" value="A34170"/>
</dbReference>
<dbReference type="RefSeq" id="NP_999198.1">
    <property type="nucleotide sequence ID" value="NM_214033.1"/>
</dbReference>
<dbReference type="PDB" id="1FIZ">
    <property type="method" value="X-ray"/>
    <property type="resolution" value="2.90 A"/>
    <property type="chains" value="A=40-302, L=17-39"/>
</dbReference>
<dbReference type="PDBsum" id="1FIZ"/>
<dbReference type="SMR" id="P08001"/>
<dbReference type="FunCoup" id="P08001">
    <property type="interactions" value="782"/>
</dbReference>
<dbReference type="STRING" id="9823.ENSSSCP00000042835"/>
<dbReference type="BindingDB" id="P08001"/>
<dbReference type="ChEMBL" id="CHEMBL3243910"/>
<dbReference type="DrugCentral" id="P08001"/>
<dbReference type="MEROPS" id="S01.223"/>
<dbReference type="GlyCosmos" id="P08001">
    <property type="glycosylation" value="2 sites, No reported glycans"/>
</dbReference>
<dbReference type="GlyGen" id="P08001">
    <property type="glycosylation" value="3 sites"/>
</dbReference>
<dbReference type="iPTMnet" id="P08001"/>
<dbReference type="PaxDb" id="9823-ENSSSCP00000021991"/>
<dbReference type="PeptideAtlas" id="P08001"/>
<dbReference type="GeneID" id="397098"/>
<dbReference type="KEGG" id="ssc:397098"/>
<dbReference type="CTD" id="49"/>
<dbReference type="eggNOG" id="KOG3627">
    <property type="taxonomic scope" value="Eukaryota"/>
</dbReference>
<dbReference type="InParanoid" id="P08001"/>
<dbReference type="OrthoDB" id="6339452at2759"/>
<dbReference type="BRENDA" id="3.4.21.10">
    <property type="organism ID" value="6170"/>
</dbReference>
<dbReference type="EvolutionaryTrace" id="P08001"/>
<dbReference type="Proteomes" id="UP000008227">
    <property type="component" value="Unplaced"/>
</dbReference>
<dbReference type="Proteomes" id="UP000314985">
    <property type="component" value="Unplaced"/>
</dbReference>
<dbReference type="Proteomes" id="UP000694570">
    <property type="component" value="Unplaced"/>
</dbReference>
<dbReference type="Proteomes" id="UP000694571">
    <property type="component" value="Unplaced"/>
</dbReference>
<dbReference type="Proteomes" id="UP000694720">
    <property type="component" value="Unplaced"/>
</dbReference>
<dbReference type="Proteomes" id="UP000694722">
    <property type="component" value="Unplaced"/>
</dbReference>
<dbReference type="Proteomes" id="UP000694723">
    <property type="component" value="Unplaced"/>
</dbReference>
<dbReference type="Proteomes" id="UP000694724">
    <property type="component" value="Unplaced"/>
</dbReference>
<dbReference type="Proteomes" id="UP000694725">
    <property type="component" value="Unplaced"/>
</dbReference>
<dbReference type="Proteomes" id="UP000694726">
    <property type="component" value="Unplaced"/>
</dbReference>
<dbReference type="Proteomes" id="UP000694727">
    <property type="component" value="Unplaced"/>
</dbReference>
<dbReference type="Proteomes" id="UP000694728">
    <property type="component" value="Unplaced"/>
</dbReference>
<dbReference type="GO" id="GO:0043159">
    <property type="term" value="C:acrosomal matrix"/>
    <property type="evidence" value="ECO:0000303"/>
    <property type="project" value="UniProtKB"/>
</dbReference>
<dbReference type="GO" id="GO:0032991">
    <property type="term" value="C:protein-containing complex"/>
    <property type="evidence" value="ECO:0000314"/>
    <property type="project" value="UniProtKB"/>
</dbReference>
<dbReference type="GO" id="GO:0004040">
    <property type="term" value="F:amidase activity"/>
    <property type="evidence" value="ECO:0000315"/>
    <property type="project" value="UniProtKB"/>
</dbReference>
<dbReference type="GO" id="GO:0005537">
    <property type="term" value="F:D-mannose binding"/>
    <property type="evidence" value="ECO:0000250"/>
    <property type="project" value="UniProtKB"/>
</dbReference>
<dbReference type="GO" id="GO:0042806">
    <property type="term" value="F:fucose binding"/>
    <property type="evidence" value="ECO:0000314"/>
    <property type="project" value="UniProtKB"/>
</dbReference>
<dbReference type="GO" id="GO:0004252">
    <property type="term" value="F:serine-type endopeptidase activity"/>
    <property type="evidence" value="ECO:0000250"/>
    <property type="project" value="UniProtKB"/>
</dbReference>
<dbReference type="GO" id="GO:0008236">
    <property type="term" value="F:serine-type peptidase activity"/>
    <property type="evidence" value="ECO:0000315"/>
    <property type="project" value="UniProtKB"/>
</dbReference>
<dbReference type="GO" id="GO:0007340">
    <property type="term" value="P:acrosome reaction"/>
    <property type="evidence" value="ECO:0000250"/>
    <property type="project" value="UniProtKB"/>
</dbReference>
<dbReference type="GO" id="GO:0007190">
    <property type="term" value="P:activation of adenylate cyclase activity"/>
    <property type="evidence" value="ECO:0000250"/>
    <property type="project" value="UniProtKB"/>
</dbReference>
<dbReference type="GO" id="GO:0006508">
    <property type="term" value="P:proteolysis"/>
    <property type="evidence" value="ECO:0000315"/>
    <property type="project" value="UniProtKB"/>
</dbReference>
<dbReference type="GO" id="GO:0007338">
    <property type="term" value="P:single fertilization"/>
    <property type="evidence" value="ECO:0000250"/>
    <property type="project" value="UniProtKB"/>
</dbReference>
<dbReference type="CDD" id="cd00190">
    <property type="entry name" value="Tryp_SPc"/>
    <property type="match status" value="1"/>
</dbReference>
<dbReference type="FunFam" id="2.40.10.10:FF:000060">
    <property type="entry name" value="Acrosin"/>
    <property type="match status" value="1"/>
</dbReference>
<dbReference type="FunFam" id="2.40.10.10:FF:000002">
    <property type="entry name" value="Transmembrane protease serine"/>
    <property type="match status" value="1"/>
</dbReference>
<dbReference type="Gene3D" id="2.40.10.10">
    <property type="entry name" value="Trypsin-like serine proteases"/>
    <property type="match status" value="2"/>
</dbReference>
<dbReference type="InterPro" id="IPR012267">
    <property type="entry name" value="Pept_S1A_acrosin"/>
</dbReference>
<dbReference type="InterPro" id="IPR009003">
    <property type="entry name" value="Peptidase_S1_PA"/>
</dbReference>
<dbReference type="InterPro" id="IPR043504">
    <property type="entry name" value="Peptidase_S1_PA_chymotrypsin"/>
</dbReference>
<dbReference type="InterPro" id="IPR001314">
    <property type="entry name" value="Peptidase_S1A"/>
</dbReference>
<dbReference type="InterPro" id="IPR001254">
    <property type="entry name" value="Trypsin_dom"/>
</dbReference>
<dbReference type="InterPro" id="IPR018114">
    <property type="entry name" value="TRYPSIN_HIS"/>
</dbReference>
<dbReference type="InterPro" id="IPR033116">
    <property type="entry name" value="TRYPSIN_SER"/>
</dbReference>
<dbReference type="PANTHER" id="PTHR24252:SF8">
    <property type="entry name" value="ACROSIN"/>
    <property type="match status" value="1"/>
</dbReference>
<dbReference type="PANTHER" id="PTHR24252">
    <property type="entry name" value="ACROSIN-RELATED"/>
    <property type="match status" value="1"/>
</dbReference>
<dbReference type="Pfam" id="PF00089">
    <property type="entry name" value="Trypsin"/>
    <property type="match status" value="1"/>
</dbReference>
<dbReference type="PIRSF" id="PIRSF001141">
    <property type="entry name" value="Acrosin"/>
    <property type="match status" value="1"/>
</dbReference>
<dbReference type="PRINTS" id="PR00722">
    <property type="entry name" value="CHYMOTRYPSIN"/>
</dbReference>
<dbReference type="SMART" id="SM00020">
    <property type="entry name" value="Tryp_SPc"/>
    <property type="match status" value="1"/>
</dbReference>
<dbReference type="SUPFAM" id="SSF50494">
    <property type="entry name" value="Trypsin-like serine proteases"/>
    <property type="match status" value="1"/>
</dbReference>
<dbReference type="PROSITE" id="PS50240">
    <property type="entry name" value="TRYPSIN_DOM"/>
    <property type="match status" value="1"/>
</dbReference>
<dbReference type="PROSITE" id="PS00134">
    <property type="entry name" value="TRYPSIN_HIS"/>
    <property type="match status" value="1"/>
</dbReference>
<dbReference type="PROSITE" id="PS00135">
    <property type="entry name" value="TRYPSIN_SER"/>
    <property type="match status" value="1"/>
</dbReference>
<proteinExistence type="evidence at protein level"/>
<sequence length="415" mass="45362">MLPTAVLLVLAVSVAARDNATCDGPCGLRFRQKLESGMRVVGGMSAEPGAWPWMVSLQIFMYHNNRRYHTCGGILLNSHWVLTAAHCFKNKKKVTDWRLIFGANEVVWGSNKPVKPPLQERFVEEIIIHEKYVSGLEINDIALIKITPPVPCGPFIGPGCLPQFKAGPPRAPQTCWVTGWGYLKEKGPRTSPTLQEARVALIDLELCNSTRWYNGRIRSTNVCAGYPRGKIDTCQGDSGGPLMCRDRAENTFVVVGITSWGVGCARAKRPGVYTSTWPYLNWIASKIGSNALQMVQLGTPPRPSTPAPPVRPPSVQTPVRPPWYFQRPPGPSQQPGSRPRPPAPPPAPPPPPPPPPPPPPPPPPPPQQVSAKPPQALSFAKRLQQLIEALKGTAFSSGRSYYETETTDLQELPAS</sequence>
<name>ACRO_PIG</name>
<evidence type="ECO:0000250" key="1"/>
<evidence type="ECO:0000255" key="2">
    <source>
        <dbReference type="PROSITE-ProRule" id="PRU00274"/>
    </source>
</evidence>
<evidence type="ECO:0000256" key="3">
    <source>
        <dbReference type="SAM" id="MobiDB-lite"/>
    </source>
</evidence>
<evidence type="ECO:0000269" key="4">
    <source>
    </source>
</evidence>
<evidence type="ECO:0000269" key="5">
    <source>
    </source>
</evidence>
<evidence type="ECO:0000269" key="6">
    <source>
    </source>
</evidence>
<evidence type="ECO:0000269" key="7">
    <source>
    </source>
</evidence>
<evidence type="ECO:0000305" key="8"/>
<evidence type="ECO:0007829" key="9">
    <source>
        <dbReference type="PDB" id="1FIZ"/>
    </source>
</evidence>
<organism>
    <name type="scientific">Sus scrofa</name>
    <name type="common">Pig</name>
    <dbReference type="NCBI Taxonomy" id="9823"/>
    <lineage>
        <taxon>Eukaryota</taxon>
        <taxon>Metazoa</taxon>
        <taxon>Chordata</taxon>
        <taxon>Craniata</taxon>
        <taxon>Vertebrata</taxon>
        <taxon>Euteleostomi</taxon>
        <taxon>Mammalia</taxon>
        <taxon>Eutheria</taxon>
        <taxon>Laurasiatheria</taxon>
        <taxon>Artiodactyla</taxon>
        <taxon>Suina</taxon>
        <taxon>Suidae</taxon>
        <taxon>Sus</taxon>
    </lineage>
</organism>
<comment type="function">
    <text>Acrosin is the major protease of mammalian spermatozoa. It is a serine protease of trypsin-like cleavage specificity, it is synthesized in a zymogen form, proacrosin and stored in the acrosome.</text>
</comment>
<comment type="catalytic activity">
    <reaction>
        <text>Preferential cleavage: Arg-|-Xaa, Lys-|-Xaa.</text>
        <dbReference type="EC" id="3.4.21.10"/>
    </reaction>
</comment>
<comment type="activity regulation">
    <text evidence="1">Inhibited by SERPINA5.</text>
</comment>
<comment type="subunit">
    <text evidence="1">Heavy chain (catalytic) and a light chain linked by two disulfide bonds. Forms a heterodimer with SERPINA5 (By similarity).</text>
</comment>
<comment type="similarity">
    <text evidence="2">Belongs to the peptidase S1 family.</text>
</comment>